<reference key="1">
    <citation type="journal article" date="2005" name="Nature">
        <title>The map-based sequence of the rice genome.</title>
        <authorList>
            <consortium name="International rice genome sequencing project (IRGSP)"/>
        </authorList>
    </citation>
    <scope>NUCLEOTIDE SEQUENCE [LARGE SCALE GENOMIC DNA]</scope>
    <source>
        <strain>cv. Nipponbare</strain>
    </source>
</reference>
<reference key="2">
    <citation type="journal article" date="2008" name="Nucleic Acids Res.">
        <title>The rice annotation project database (RAP-DB): 2008 update.</title>
        <authorList>
            <consortium name="The rice annotation project (RAP)"/>
        </authorList>
    </citation>
    <scope>GENOME REANNOTATION</scope>
    <source>
        <strain>cv. Nipponbare</strain>
    </source>
</reference>
<reference key="3">
    <citation type="journal article" date="2013" name="Rice">
        <title>Improvement of the Oryza sativa Nipponbare reference genome using next generation sequence and optical map data.</title>
        <authorList>
            <person name="Kawahara Y."/>
            <person name="de la Bastide M."/>
            <person name="Hamilton J.P."/>
            <person name="Kanamori H."/>
            <person name="McCombie W.R."/>
            <person name="Ouyang S."/>
            <person name="Schwartz D.C."/>
            <person name="Tanaka T."/>
            <person name="Wu J."/>
            <person name="Zhou S."/>
            <person name="Childs K.L."/>
            <person name="Davidson R.M."/>
            <person name="Lin H."/>
            <person name="Quesada-Ocampo L."/>
            <person name="Vaillancourt B."/>
            <person name="Sakai H."/>
            <person name="Lee S.S."/>
            <person name="Kim J."/>
            <person name="Numa H."/>
            <person name="Itoh T."/>
            <person name="Buell C.R."/>
            <person name="Matsumoto T."/>
        </authorList>
    </citation>
    <scope>GENOME REANNOTATION</scope>
    <source>
        <strain>cv. Nipponbare</strain>
    </source>
</reference>
<reference key="4">
    <citation type="journal article" date="2005" name="PLoS Biol.">
        <title>The genomes of Oryza sativa: a history of duplications.</title>
        <authorList>
            <person name="Yu J."/>
            <person name="Wang J."/>
            <person name="Lin W."/>
            <person name="Li S."/>
            <person name="Li H."/>
            <person name="Zhou J."/>
            <person name="Ni P."/>
            <person name="Dong W."/>
            <person name="Hu S."/>
            <person name="Zeng C."/>
            <person name="Zhang J."/>
            <person name="Zhang Y."/>
            <person name="Li R."/>
            <person name="Xu Z."/>
            <person name="Li S."/>
            <person name="Li X."/>
            <person name="Zheng H."/>
            <person name="Cong L."/>
            <person name="Lin L."/>
            <person name="Yin J."/>
            <person name="Geng J."/>
            <person name="Li G."/>
            <person name="Shi J."/>
            <person name="Liu J."/>
            <person name="Lv H."/>
            <person name="Li J."/>
            <person name="Wang J."/>
            <person name="Deng Y."/>
            <person name="Ran L."/>
            <person name="Shi X."/>
            <person name="Wang X."/>
            <person name="Wu Q."/>
            <person name="Li C."/>
            <person name="Ren X."/>
            <person name="Wang J."/>
            <person name="Wang X."/>
            <person name="Li D."/>
            <person name="Liu D."/>
            <person name="Zhang X."/>
            <person name="Ji Z."/>
            <person name="Zhao W."/>
            <person name="Sun Y."/>
            <person name="Zhang Z."/>
            <person name="Bao J."/>
            <person name="Han Y."/>
            <person name="Dong L."/>
            <person name="Ji J."/>
            <person name="Chen P."/>
            <person name="Wu S."/>
            <person name="Liu J."/>
            <person name="Xiao Y."/>
            <person name="Bu D."/>
            <person name="Tan J."/>
            <person name="Yang L."/>
            <person name="Ye C."/>
            <person name="Zhang J."/>
            <person name="Xu J."/>
            <person name="Zhou Y."/>
            <person name="Yu Y."/>
            <person name="Zhang B."/>
            <person name="Zhuang S."/>
            <person name="Wei H."/>
            <person name="Liu B."/>
            <person name="Lei M."/>
            <person name="Yu H."/>
            <person name="Li Y."/>
            <person name="Xu H."/>
            <person name="Wei S."/>
            <person name="He X."/>
            <person name="Fang L."/>
            <person name="Zhang Z."/>
            <person name="Zhang Y."/>
            <person name="Huang X."/>
            <person name="Su Z."/>
            <person name="Tong W."/>
            <person name="Li J."/>
            <person name="Tong Z."/>
            <person name="Li S."/>
            <person name="Ye J."/>
            <person name="Wang L."/>
            <person name="Fang L."/>
            <person name="Lei T."/>
            <person name="Chen C.-S."/>
            <person name="Chen H.-C."/>
            <person name="Xu Z."/>
            <person name="Li H."/>
            <person name="Huang H."/>
            <person name="Zhang F."/>
            <person name="Xu H."/>
            <person name="Li N."/>
            <person name="Zhao C."/>
            <person name="Li S."/>
            <person name="Dong L."/>
            <person name="Huang Y."/>
            <person name="Li L."/>
            <person name="Xi Y."/>
            <person name="Qi Q."/>
            <person name="Li W."/>
            <person name="Zhang B."/>
            <person name="Hu W."/>
            <person name="Zhang Y."/>
            <person name="Tian X."/>
            <person name="Jiao Y."/>
            <person name="Liang X."/>
            <person name="Jin J."/>
            <person name="Gao L."/>
            <person name="Zheng W."/>
            <person name="Hao B."/>
            <person name="Liu S.-M."/>
            <person name="Wang W."/>
            <person name="Yuan L."/>
            <person name="Cao M."/>
            <person name="McDermott J."/>
            <person name="Samudrala R."/>
            <person name="Wang J."/>
            <person name="Wong G.K.-S."/>
            <person name="Yang H."/>
        </authorList>
    </citation>
    <scope>NUCLEOTIDE SEQUENCE [LARGE SCALE GENOMIC DNA]</scope>
    <source>
        <strain>cv. Nipponbare</strain>
    </source>
</reference>
<reference key="5">
    <citation type="journal article" date="2003" name="Science">
        <title>Collection, mapping, and annotation of over 28,000 cDNA clones from japonica rice.</title>
        <authorList>
            <consortium name="The rice full-length cDNA consortium"/>
        </authorList>
    </citation>
    <scope>NUCLEOTIDE SEQUENCE [LARGE SCALE MRNA]</scope>
    <source>
        <strain>cv. Nipponbare</strain>
    </source>
</reference>
<reference key="6">
    <citation type="journal article" date="2000" name="Proc. Natl. Acad. Sci. U.S.A.">
        <title>Purification, molecular cloning, and sequence analysis of sucrose-6F-phosphate phosphohydrolase from plants.</title>
        <authorList>
            <person name="Lunn J.E."/>
            <person name="Ashton A.R."/>
            <person name="Hatch M.D."/>
            <person name="Heldt H.W."/>
        </authorList>
    </citation>
    <scope>PROTEIN SEQUENCE OF 102-118; 261-276 AND 289-295</scope>
    <scope>BIOPHYSICOCHEMICAL PROPERTIES</scope>
    <scope>SUBUNIT</scope>
</reference>
<reference key="7">
    <citation type="journal article" date="2003" name="Gene">
        <title>Sucrose-phosphatase gene families in plants.</title>
        <authorList>
            <person name="Lunn J.E."/>
        </authorList>
    </citation>
    <scope>GENE FAMILY</scope>
    <scope>NOMENCLATURE</scope>
</reference>
<protein>
    <recommendedName>
        <fullName>Sucrose-phosphatase 2</fullName>
        <shortName>OsSPP2</shortName>
        <ecNumber>3.1.3.24</ecNumber>
    </recommendedName>
</protein>
<evidence type="ECO:0000269" key="1">
    <source>
    </source>
</evidence>
<evidence type="ECO:0000305" key="2"/>
<dbReference type="EC" id="3.1.3.24"/>
<dbReference type="EMBL" id="AP005649">
    <property type="protein sequence ID" value="BAD13232.1"/>
    <property type="molecule type" value="Genomic_DNA"/>
</dbReference>
<dbReference type="EMBL" id="AP008208">
    <property type="protein sequence ID" value="BAF07780.1"/>
    <property type="molecule type" value="Genomic_DNA"/>
</dbReference>
<dbReference type="EMBL" id="AP014958">
    <property type="protein sequence ID" value="BAS76941.1"/>
    <property type="molecule type" value="Genomic_DNA"/>
</dbReference>
<dbReference type="EMBL" id="CM000139">
    <property type="status" value="NOT_ANNOTATED_CDS"/>
    <property type="molecule type" value="Genomic_DNA"/>
</dbReference>
<dbReference type="EMBL" id="AK063330">
    <property type="protein sequence ID" value="BAG88651.1"/>
    <property type="molecule type" value="mRNA"/>
</dbReference>
<dbReference type="RefSeq" id="XP_015622612.1">
    <property type="nucleotide sequence ID" value="XM_015767126.1"/>
</dbReference>
<dbReference type="SMR" id="Q6YXW6"/>
<dbReference type="FunCoup" id="Q6YXW6">
    <property type="interactions" value="367"/>
</dbReference>
<dbReference type="STRING" id="39947.Q6YXW6"/>
<dbReference type="PaxDb" id="39947-Q6YXW6"/>
<dbReference type="EnsemblPlants" id="Os02t0143100-01">
    <property type="protein sequence ID" value="Os02t0143100-01"/>
    <property type="gene ID" value="Os02g0143100"/>
</dbReference>
<dbReference type="Gramene" id="Os02t0143100-01">
    <property type="protein sequence ID" value="Os02t0143100-01"/>
    <property type="gene ID" value="Os02g0143100"/>
</dbReference>
<dbReference type="KEGG" id="dosa:Os02g0143100"/>
<dbReference type="eggNOG" id="ENOG502QTVT">
    <property type="taxonomic scope" value="Eukaryota"/>
</dbReference>
<dbReference type="HOGENOM" id="CLU_030534_1_0_1"/>
<dbReference type="InParanoid" id="Q6YXW6"/>
<dbReference type="OMA" id="FNLWELE"/>
<dbReference type="OrthoDB" id="531008at2759"/>
<dbReference type="PlantReactome" id="R-OSA-1119465">
    <property type="pathway name" value="Sucrose biosynthesis"/>
</dbReference>
<dbReference type="SABIO-RK" id="Q6YXW6"/>
<dbReference type="UniPathway" id="UPA00371">
    <property type="reaction ID" value="UER00546"/>
</dbReference>
<dbReference type="Proteomes" id="UP000000763">
    <property type="component" value="Chromosome 2"/>
</dbReference>
<dbReference type="Proteomes" id="UP000007752">
    <property type="component" value="Chromosome 2"/>
</dbReference>
<dbReference type="Proteomes" id="UP000059680">
    <property type="component" value="Chromosome 2"/>
</dbReference>
<dbReference type="GO" id="GO:0000287">
    <property type="term" value="F:magnesium ion binding"/>
    <property type="evidence" value="ECO:0007669"/>
    <property type="project" value="InterPro"/>
</dbReference>
<dbReference type="GO" id="GO:0050307">
    <property type="term" value="F:sucrose-phosphate phosphatase activity"/>
    <property type="evidence" value="ECO:0007669"/>
    <property type="project" value="UniProtKB-EC"/>
</dbReference>
<dbReference type="GO" id="GO:0005986">
    <property type="term" value="P:sucrose biosynthetic process"/>
    <property type="evidence" value="ECO:0007669"/>
    <property type="project" value="UniProtKB-UniPathway"/>
</dbReference>
<dbReference type="CDD" id="cd02605">
    <property type="entry name" value="HAD_SPP"/>
    <property type="match status" value="1"/>
</dbReference>
<dbReference type="Gene3D" id="3.10.450.50">
    <property type="match status" value="1"/>
</dbReference>
<dbReference type="Gene3D" id="3.90.1070.10">
    <property type="match status" value="1"/>
</dbReference>
<dbReference type="Gene3D" id="3.40.50.1000">
    <property type="entry name" value="HAD superfamily/HAD-like"/>
    <property type="match status" value="1"/>
</dbReference>
<dbReference type="InterPro" id="IPR036412">
    <property type="entry name" value="HAD-like_sf"/>
</dbReference>
<dbReference type="InterPro" id="IPR006379">
    <property type="entry name" value="HAD-SF_hydro_IIB"/>
</dbReference>
<dbReference type="InterPro" id="IPR023214">
    <property type="entry name" value="HAD_sf"/>
</dbReference>
<dbReference type="InterPro" id="IPR032710">
    <property type="entry name" value="NTF2-like_dom_sf"/>
</dbReference>
<dbReference type="InterPro" id="IPR006380">
    <property type="entry name" value="SPP-like_dom"/>
</dbReference>
<dbReference type="InterPro" id="IPR013679">
    <property type="entry name" value="SPP_C"/>
</dbReference>
<dbReference type="InterPro" id="IPR051518">
    <property type="entry name" value="Sucrose_Phosphatase"/>
</dbReference>
<dbReference type="InterPro" id="IPR012847">
    <property type="entry name" value="Sucrose_phosphatase_pln/cyn"/>
</dbReference>
<dbReference type="NCBIfam" id="TIGR01484">
    <property type="entry name" value="HAD-SF-IIB"/>
    <property type="match status" value="1"/>
</dbReference>
<dbReference type="NCBIfam" id="TIGR01482">
    <property type="entry name" value="SPP-subfamily"/>
    <property type="match status" value="1"/>
</dbReference>
<dbReference type="NCBIfam" id="TIGR01485">
    <property type="entry name" value="SPP_plant-cyano"/>
    <property type="match status" value="1"/>
</dbReference>
<dbReference type="PANTHER" id="PTHR46521">
    <property type="entry name" value="SUCROSE-PHOSPHATASE 2-RELATED"/>
    <property type="match status" value="1"/>
</dbReference>
<dbReference type="PANTHER" id="PTHR46521:SF4">
    <property type="entry name" value="SUCROSE-PHOSPHATASE 2-RELATED"/>
    <property type="match status" value="1"/>
</dbReference>
<dbReference type="Pfam" id="PF05116">
    <property type="entry name" value="S6PP"/>
    <property type="match status" value="1"/>
</dbReference>
<dbReference type="Pfam" id="PF08472">
    <property type="entry name" value="S6PP_C"/>
    <property type="match status" value="1"/>
</dbReference>
<dbReference type="SFLD" id="SFLDS00003">
    <property type="entry name" value="Haloacid_Dehalogenase"/>
    <property type="match status" value="1"/>
</dbReference>
<dbReference type="SFLD" id="SFLDF00043">
    <property type="entry name" value="sucrose-phosphatase"/>
    <property type="match status" value="1"/>
</dbReference>
<dbReference type="SUPFAM" id="SSF56784">
    <property type="entry name" value="HAD-like"/>
    <property type="match status" value="1"/>
</dbReference>
<dbReference type="SUPFAM" id="SSF54427">
    <property type="entry name" value="NTF2-like"/>
    <property type="match status" value="1"/>
</dbReference>
<proteinExistence type="evidence at protein level"/>
<feature type="chain" id="PRO_0000350618" description="Sucrose-phosphatase 2">
    <location>
        <begin position="1"/>
        <end position="423"/>
    </location>
</feature>
<gene>
    <name type="primary">SPP2</name>
    <name type="ordered locus">Os02g0143100</name>
    <name type="ordered locus">LOC_Os02g05030</name>
    <name type="ORF">OsJ_005195</name>
    <name type="ORF">OSJNBa0064G16.2</name>
</gene>
<keyword id="KW-0903">Direct protein sequencing</keyword>
<keyword id="KW-0378">Hydrolase</keyword>
<keyword id="KW-0460">Magnesium</keyword>
<keyword id="KW-1185">Reference proteome</keyword>
<accession>Q6YXW6</accession>
<accession>A3A323</accession>
<accession>B7E8F4</accession>
<sequence length="423" mass="47255">MDKLNGSARLMIVSDLDHTMVDHHDEENLSLLRFGALWESVYCQDSLLVFSTGRSPTLYMELRKEKPMLTPDITIMSVGTEITYGEEMVPDDGWVEYLNNKWDRNIVVEETANVSELKLQVESEQRPHKVSFYVDKKSAQEVIKSLSEKLEKRGLDVKIIYSGGQDLDVLPQGAGKGQALAYLLKKLSSCGKPPNNTLACGDSGNDAELFSIPGVHGVMVSNAQEELLQWYSENAKDNPKIIHATERCAAGIIQAIGHFKLGPNVSPRDVDFPYVKENPVKPTDAVVKFYVLYEKWRRAEVPKSDSVTQYFKNITHANGVIIHPAGLECSLHASIDALGSCYGDKQGKKYRAWVDRLVVSQCGSEGWLVRFNLWELEGDVWSCCLTSLALNAKPETPEGFVVTHIHKTWLKGYSSADEQSSKL</sequence>
<name>SPP2_ORYSJ</name>
<organism>
    <name type="scientific">Oryza sativa subsp. japonica</name>
    <name type="common">Rice</name>
    <dbReference type="NCBI Taxonomy" id="39947"/>
    <lineage>
        <taxon>Eukaryota</taxon>
        <taxon>Viridiplantae</taxon>
        <taxon>Streptophyta</taxon>
        <taxon>Embryophyta</taxon>
        <taxon>Tracheophyta</taxon>
        <taxon>Spermatophyta</taxon>
        <taxon>Magnoliopsida</taxon>
        <taxon>Liliopsida</taxon>
        <taxon>Poales</taxon>
        <taxon>Poaceae</taxon>
        <taxon>BOP clade</taxon>
        <taxon>Oryzoideae</taxon>
        <taxon>Oryzeae</taxon>
        <taxon>Oryzinae</taxon>
        <taxon>Oryza</taxon>
        <taxon>Oryza sativa</taxon>
    </lineage>
</organism>
<comment type="function">
    <text>Catalyzes the final step of sucrose synthesis. Inactive with fructose 6-phosphate as substrate.</text>
</comment>
<comment type="catalytic activity">
    <reaction>
        <text>sucrose 6(F)-phosphate + H2O = sucrose + phosphate</text>
        <dbReference type="Rhea" id="RHEA:19289"/>
        <dbReference type="ChEBI" id="CHEBI:15377"/>
        <dbReference type="ChEBI" id="CHEBI:17992"/>
        <dbReference type="ChEBI" id="CHEBI:43474"/>
        <dbReference type="ChEBI" id="CHEBI:57723"/>
        <dbReference type="EC" id="3.1.3.24"/>
    </reaction>
</comment>
<comment type="cofactor">
    <cofactor>
        <name>Mg(2+)</name>
        <dbReference type="ChEBI" id="CHEBI:18420"/>
    </cofactor>
</comment>
<comment type="activity regulation">
    <text>Inactivated by zinc.</text>
</comment>
<comment type="biophysicochemical properties">
    <kinetics>
        <KM evidence="1">65 uM for sucrose 6(F)-phosphate</KM>
    </kinetics>
</comment>
<comment type="pathway">
    <text>Glycan biosynthesis; sucrose biosynthesis; sucrose from D-fructose 6-phosphate and UDP-alpha-D-glucose: step 2/2.</text>
</comment>
<comment type="subunit">
    <text evidence="1">Homodimer.</text>
</comment>
<comment type="PTM">
    <text>The N-terminus is blocked.</text>
</comment>
<comment type="similarity">
    <text evidence="2">Belongs to the sucrose phosphatase family.</text>
</comment>